<sequence length="81" mass="8963">MSVKGQMLQDPFLNTLRKEHVPVSIYLVNGIKLQGQVDSFDQYVILLKNTVTQMVYKHAISTIVPGRAVSIPHGPTPTSES</sequence>
<feature type="chain" id="PRO_0000265165" description="RNA-binding protein Hfq">
    <location>
        <begin position="1"/>
        <end position="81"/>
    </location>
</feature>
<feature type="domain" description="Sm" evidence="2">
    <location>
        <begin position="10"/>
        <end position="69"/>
    </location>
</feature>
<accession>Q1H0Y0</accession>
<organism>
    <name type="scientific">Methylobacillus flagellatus (strain ATCC 51484 / DSM 6875 / VKM B-1610 / KT)</name>
    <dbReference type="NCBI Taxonomy" id="265072"/>
    <lineage>
        <taxon>Bacteria</taxon>
        <taxon>Pseudomonadati</taxon>
        <taxon>Pseudomonadota</taxon>
        <taxon>Betaproteobacteria</taxon>
        <taxon>Nitrosomonadales</taxon>
        <taxon>Methylophilaceae</taxon>
        <taxon>Methylobacillus</taxon>
    </lineage>
</organism>
<proteinExistence type="inferred from homology"/>
<gene>
    <name evidence="1" type="primary">hfq</name>
    <name type="ordered locus">Mfla_1589</name>
</gene>
<keyword id="KW-1185">Reference proteome</keyword>
<keyword id="KW-0694">RNA-binding</keyword>
<keyword id="KW-0346">Stress response</keyword>
<evidence type="ECO:0000255" key="1">
    <source>
        <dbReference type="HAMAP-Rule" id="MF_00436"/>
    </source>
</evidence>
<evidence type="ECO:0000255" key="2">
    <source>
        <dbReference type="PROSITE-ProRule" id="PRU01346"/>
    </source>
</evidence>
<reference key="1">
    <citation type="submission" date="2006-03" db="EMBL/GenBank/DDBJ databases">
        <title>Complete sequence of Methylobacillus flagellatus KT.</title>
        <authorList>
            <consortium name="US DOE Joint Genome Institute"/>
            <person name="Copeland A."/>
            <person name="Lucas S."/>
            <person name="Lapidus A."/>
            <person name="Barry K."/>
            <person name="Detter J.C."/>
            <person name="Glavina del Rio T."/>
            <person name="Hammon N."/>
            <person name="Israni S."/>
            <person name="Dalin E."/>
            <person name="Tice H."/>
            <person name="Pitluck S."/>
            <person name="Brettin T."/>
            <person name="Bruce D."/>
            <person name="Han C."/>
            <person name="Tapia R."/>
            <person name="Saunders E."/>
            <person name="Gilna P."/>
            <person name="Schmutz J."/>
            <person name="Larimer F."/>
            <person name="Land M."/>
            <person name="Kyrpides N."/>
            <person name="Anderson I."/>
            <person name="Richardson P."/>
        </authorList>
    </citation>
    <scope>NUCLEOTIDE SEQUENCE [LARGE SCALE GENOMIC DNA]</scope>
    <source>
        <strain>ATCC 51484 / DSM 6875 / VKM B-1610 / KT</strain>
    </source>
</reference>
<dbReference type="EMBL" id="CP000284">
    <property type="protein sequence ID" value="ABE49857.1"/>
    <property type="molecule type" value="Genomic_DNA"/>
</dbReference>
<dbReference type="RefSeq" id="WP_011479811.1">
    <property type="nucleotide sequence ID" value="NC_007947.1"/>
</dbReference>
<dbReference type="SMR" id="Q1H0Y0"/>
<dbReference type="STRING" id="265072.Mfla_1589"/>
<dbReference type="KEGG" id="mfa:Mfla_1589"/>
<dbReference type="eggNOG" id="COG1923">
    <property type="taxonomic scope" value="Bacteria"/>
</dbReference>
<dbReference type="HOGENOM" id="CLU_113688_2_2_4"/>
<dbReference type="OrthoDB" id="9799751at2"/>
<dbReference type="Proteomes" id="UP000002440">
    <property type="component" value="Chromosome"/>
</dbReference>
<dbReference type="GO" id="GO:0005829">
    <property type="term" value="C:cytosol"/>
    <property type="evidence" value="ECO:0007669"/>
    <property type="project" value="TreeGrafter"/>
</dbReference>
<dbReference type="GO" id="GO:0003723">
    <property type="term" value="F:RNA binding"/>
    <property type="evidence" value="ECO:0007669"/>
    <property type="project" value="UniProtKB-UniRule"/>
</dbReference>
<dbReference type="GO" id="GO:0006355">
    <property type="term" value="P:regulation of DNA-templated transcription"/>
    <property type="evidence" value="ECO:0007669"/>
    <property type="project" value="InterPro"/>
</dbReference>
<dbReference type="GO" id="GO:0043487">
    <property type="term" value="P:regulation of RNA stability"/>
    <property type="evidence" value="ECO:0007669"/>
    <property type="project" value="TreeGrafter"/>
</dbReference>
<dbReference type="GO" id="GO:0045974">
    <property type="term" value="P:regulation of translation, ncRNA-mediated"/>
    <property type="evidence" value="ECO:0007669"/>
    <property type="project" value="TreeGrafter"/>
</dbReference>
<dbReference type="CDD" id="cd01716">
    <property type="entry name" value="Hfq"/>
    <property type="match status" value="1"/>
</dbReference>
<dbReference type="FunFam" id="2.30.30.100:FF:000001">
    <property type="entry name" value="RNA-binding protein Hfq"/>
    <property type="match status" value="1"/>
</dbReference>
<dbReference type="Gene3D" id="2.30.30.100">
    <property type="match status" value="1"/>
</dbReference>
<dbReference type="HAMAP" id="MF_00436">
    <property type="entry name" value="Hfq"/>
    <property type="match status" value="1"/>
</dbReference>
<dbReference type="InterPro" id="IPR005001">
    <property type="entry name" value="Hfq"/>
</dbReference>
<dbReference type="InterPro" id="IPR010920">
    <property type="entry name" value="LSM_dom_sf"/>
</dbReference>
<dbReference type="InterPro" id="IPR047575">
    <property type="entry name" value="Sm"/>
</dbReference>
<dbReference type="NCBIfam" id="TIGR02383">
    <property type="entry name" value="Hfq"/>
    <property type="match status" value="1"/>
</dbReference>
<dbReference type="NCBIfam" id="NF001602">
    <property type="entry name" value="PRK00395.1"/>
    <property type="match status" value="1"/>
</dbReference>
<dbReference type="PANTHER" id="PTHR34772">
    <property type="entry name" value="RNA-BINDING PROTEIN HFQ"/>
    <property type="match status" value="1"/>
</dbReference>
<dbReference type="PANTHER" id="PTHR34772:SF1">
    <property type="entry name" value="RNA-BINDING PROTEIN HFQ"/>
    <property type="match status" value="1"/>
</dbReference>
<dbReference type="Pfam" id="PF17209">
    <property type="entry name" value="Hfq"/>
    <property type="match status" value="1"/>
</dbReference>
<dbReference type="SUPFAM" id="SSF50182">
    <property type="entry name" value="Sm-like ribonucleoproteins"/>
    <property type="match status" value="1"/>
</dbReference>
<dbReference type="PROSITE" id="PS52002">
    <property type="entry name" value="SM"/>
    <property type="match status" value="1"/>
</dbReference>
<protein>
    <recommendedName>
        <fullName evidence="1">RNA-binding protein Hfq</fullName>
    </recommendedName>
</protein>
<name>HFQ_METFK</name>
<comment type="function">
    <text evidence="1">RNA chaperone that binds small regulatory RNA (sRNAs) and mRNAs to facilitate mRNA translational regulation in response to envelope stress, environmental stress and changes in metabolite concentrations. Also binds with high specificity to tRNAs.</text>
</comment>
<comment type="subunit">
    <text evidence="1">Homohexamer.</text>
</comment>
<comment type="similarity">
    <text evidence="1">Belongs to the Hfq family.</text>
</comment>